<reference key="1">
    <citation type="journal article" date="2005" name="Science">
        <title>The transcriptional landscape of the mammalian genome.</title>
        <authorList>
            <person name="Carninci P."/>
            <person name="Kasukawa T."/>
            <person name="Katayama S."/>
            <person name="Gough J."/>
            <person name="Frith M.C."/>
            <person name="Maeda N."/>
            <person name="Oyama R."/>
            <person name="Ravasi T."/>
            <person name="Lenhard B."/>
            <person name="Wells C."/>
            <person name="Kodzius R."/>
            <person name="Shimokawa K."/>
            <person name="Bajic V.B."/>
            <person name="Brenner S.E."/>
            <person name="Batalov S."/>
            <person name="Forrest A.R."/>
            <person name="Zavolan M."/>
            <person name="Davis M.J."/>
            <person name="Wilming L.G."/>
            <person name="Aidinis V."/>
            <person name="Allen J.E."/>
            <person name="Ambesi-Impiombato A."/>
            <person name="Apweiler R."/>
            <person name="Aturaliya R.N."/>
            <person name="Bailey T.L."/>
            <person name="Bansal M."/>
            <person name="Baxter L."/>
            <person name="Beisel K.W."/>
            <person name="Bersano T."/>
            <person name="Bono H."/>
            <person name="Chalk A.M."/>
            <person name="Chiu K.P."/>
            <person name="Choudhary V."/>
            <person name="Christoffels A."/>
            <person name="Clutterbuck D.R."/>
            <person name="Crowe M.L."/>
            <person name="Dalla E."/>
            <person name="Dalrymple B.P."/>
            <person name="de Bono B."/>
            <person name="Della Gatta G."/>
            <person name="di Bernardo D."/>
            <person name="Down T."/>
            <person name="Engstrom P."/>
            <person name="Fagiolini M."/>
            <person name="Faulkner G."/>
            <person name="Fletcher C.F."/>
            <person name="Fukushima T."/>
            <person name="Furuno M."/>
            <person name="Futaki S."/>
            <person name="Gariboldi M."/>
            <person name="Georgii-Hemming P."/>
            <person name="Gingeras T.R."/>
            <person name="Gojobori T."/>
            <person name="Green R.E."/>
            <person name="Gustincich S."/>
            <person name="Harbers M."/>
            <person name="Hayashi Y."/>
            <person name="Hensch T.K."/>
            <person name="Hirokawa N."/>
            <person name="Hill D."/>
            <person name="Huminiecki L."/>
            <person name="Iacono M."/>
            <person name="Ikeo K."/>
            <person name="Iwama A."/>
            <person name="Ishikawa T."/>
            <person name="Jakt M."/>
            <person name="Kanapin A."/>
            <person name="Katoh M."/>
            <person name="Kawasawa Y."/>
            <person name="Kelso J."/>
            <person name="Kitamura H."/>
            <person name="Kitano H."/>
            <person name="Kollias G."/>
            <person name="Krishnan S.P."/>
            <person name="Kruger A."/>
            <person name="Kummerfeld S.K."/>
            <person name="Kurochkin I.V."/>
            <person name="Lareau L.F."/>
            <person name="Lazarevic D."/>
            <person name="Lipovich L."/>
            <person name="Liu J."/>
            <person name="Liuni S."/>
            <person name="McWilliam S."/>
            <person name="Madan Babu M."/>
            <person name="Madera M."/>
            <person name="Marchionni L."/>
            <person name="Matsuda H."/>
            <person name="Matsuzawa S."/>
            <person name="Miki H."/>
            <person name="Mignone F."/>
            <person name="Miyake S."/>
            <person name="Morris K."/>
            <person name="Mottagui-Tabar S."/>
            <person name="Mulder N."/>
            <person name="Nakano N."/>
            <person name="Nakauchi H."/>
            <person name="Ng P."/>
            <person name="Nilsson R."/>
            <person name="Nishiguchi S."/>
            <person name="Nishikawa S."/>
            <person name="Nori F."/>
            <person name="Ohara O."/>
            <person name="Okazaki Y."/>
            <person name="Orlando V."/>
            <person name="Pang K.C."/>
            <person name="Pavan W.J."/>
            <person name="Pavesi G."/>
            <person name="Pesole G."/>
            <person name="Petrovsky N."/>
            <person name="Piazza S."/>
            <person name="Reed J."/>
            <person name="Reid J.F."/>
            <person name="Ring B.Z."/>
            <person name="Ringwald M."/>
            <person name="Rost B."/>
            <person name="Ruan Y."/>
            <person name="Salzberg S.L."/>
            <person name="Sandelin A."/>
            <person name="Schneider C."/>
            <person name="Schoenbach C."/>
            <person name="Sekiguchi K."/>
            <person name="Semple C.A."/>
            <person name="Seno S."/>
            <person name="Sessa L."/>
            <person name="Sheng Y."/>
            <person name="Shibata Y."/>
            <person name="Shimada H."/>
            <person name="Shimada K."/>
            <person name="Silva D."/>
            <person name="Sinclair B."/>
            <person name="Sperling S."/>
            <person name="Stupka E."/>
            <person name="Sugiura K."/>
            <person name="Sultana R."/>
            <person name="Takenaka Y."/>
            <person name="Taki K."/>
            <person name="Tammoja K."/>
            <person name="Tan S.L."/>
            <person name="Tang S."/>
            <person name="Taylor M.S."/>
            <person name="Tegner J."/>
            <person name="Teichmann S.A."/>
            <person name="Ueda H.R."/>
            <person name="van Nimwegen E."/>
            <person name="Verardo R."/>
            <person name="Wei C.L."/>
            <person name="Yagi K."/>
            <person name="Yamanishi H."/>
            <person name="Zabarovsky E."/>
            <person name="Zhu S."/>
            <person name="Zimmer A."/>
            <person name="Hide W."/>
            <person name="Bult C."/>
            <person name="Grimmond S.M."/>
            <person name="Teasdale R.D."/>
            <person name="Liu E.T."/>
            <person name="Brusic V."/>
            <person name="Quackenbush J."/>
            <person name="Wahlestedt C."/>
            <person name="Mattick J.S."/>
            <person name="Hume D.A."/>
            <person name="Kai C."/>
            <person name="Sasaki D."/>
            <person name="Tomaru Y."/>
            <person name="Fukuda S."/>
            <person name="Kanamori-Katayama M."/>
            <person name="Suzuki M."/>
            <person name="Aoki J."/>
            <person name="Arakawa T."/>
            <person name="Iida J."/>
            <person name="Imamura K."/>
            <person name="Itoh M."/>
            <person name="Kato T."/>
            <person name="Kawaji H."/>
            <person name="Kawagashira N."/>
            <person name="Kawashima T."/>
            <person name="Kojima M."/>
            <person name="Kondo S."/>
            <person name="Konno H."/>
            <person name="Nakano K."/>
            <person name="Ninomiya N."/>
            <person name="Nishio T."/>
            <person name="Okada M."/>
            <person name="Plessy C."/>
            <person name="Shibata K."/>
            <person name="Shiraki T."/>
            <person name="Suzuki S."/>
            <person name="Tagami M."/>
            <person name="Waki K."/>
            <person name="Watahiki A."/>
            <person name="Okamura-Oho Y."/>
            <person name="Suzuki H."/>
            <person name="Kawai J."/>
            <person name="Hayashizaki Y."/>
        </authorList>
    </citation>
    <scope>NUCLEOTIDE SEQUENCE [LARGE SCALE MRNA]</scope>
    <source>
        <strain>C57BL/6J</strain>
        <tissue>Bone marrow</tissue>
    </source>
</reference>
<reference key="2">
    <citation type="journal article" date="2009" name="PLoS Biol.">
        <title>Lineage-specific biology revealed by a finished genome assembly of the mouse.</title>
        <authorList>
            <person name="Church D.M."/>
            <person name="Goodstadt L."/>
            <person name="Hillier L.W."/>
            <person name="Zody M.C."/>
            <person name="Goldstein S."/>
            <person name="She X."/>
            <person name="Bult C.J."/>
            <person name="Agarwala R."/>
            <person name="Cherry J.L."/>
            <person name="DiCuccio M."/>
            <person name="Hlavina W."/>
            <person name="Kapustin Y."/>
            <person name="Meric P."/>
            <person name="Maglott D."/>
            <person name="Birtle Z."/>
            <person name="Marques A.C."/>
            <person name="Graves T."/>
            <person name="Zhou S."/>
            <person name="Teague B."/>
            <person name="Potamousis K."/>
            <person name="Churas C."/>
            <person name="Place M."/>
            <person name="Herschleb J."/>
            <person name="Runnheim R."/>
            <person name="Forrest D."/>
            <person name="Amos-Landgraf J."/>
            <person name="Schwartz D.C."/>
            <person name="Cheng Z."/>
            <person name="Lindblad-Toh K."/>
            <person name="Eichler E.E."/>
            <person name="Ponting C.P."/>
        </authorList>
    </citation>
    <scope>NUCLEOTIDE SEQUENCE [LARGE SCALE GENOMIC DNA]</scope>
    <source>
        <strain>C57BL/6J</strain>
    </source>
</reference>
<reference key="3">
    <citation type="journal article" date="2004" name="Genome Res.">
        <title>The status, quality, and expansion of the NIH full-length cDNA project: the Mammalian Gene Collection (MGC).</title>
        <authorList>
            <consortium name="The MGC Project Team"/>
        </authorList>
    </citation>
    <scope>NUCLEOTIDE SEQUENCE [LARGE SCALE MRNA]</scope>
    <source>
        <tissue>Brain</tissue>
    </source>
</reference>
<reference key="4">
    <citation type="journal article" date="1997" name="Genomics">
        <title>Isolation and chromosomal mapping of a novel ATP-binding cassette transporter conserved in mouse and human.</title>
        <authorList>
            <person name="Savary S."/>
            <person name="Allikmets R."/>
            <person name="Denizot F."/>
            <person name="Luciani M.-F."/>
            <person name="Mattei M.-G."/>
            <person name="Dean M."/>
            <person name="Chimini G."/>
        </authorList>
    </citation>
    <scope>NUCLEOTIDE SEQUENCE [MRNA] OF 59-752</scope>
    <source>
        <strain>DBA/2J</strain>
    </source>
</reference>
<reference key="5">
    <citation type="journal article" date="2006" name="EMBO J.">
        <title>Iron-responsive degradation of iron-regulatory protein 1 does not require the Fe-S cluster.</title>
        <authorList>
            <person name="Clarke S.L."/>
            <person name="Vasanthakumar A."/>
            <person name="Anderson S.A."/>
            <person name="Pondarre C."/>
            <person name="Koh C.M."/>
            <person name="Deck K.M."/>
            <person name="Pitula J.S."/>
            <person name="Epstein C.J."/>
            <person name="Fleming M.D."/>
            <person name="Eisenstein R.S."/>
        </authorList>
    </citation>
    <scope>DISRUPTION PHENOTYPE</scope>
    <scope>FUNCTION</scope>
</reference>
<reference key="6">
    <citation type="journal article" date="2006" name="Hum. Mol. Genet.">
        <title>The mitochondrial ATP-binding cassette transporter Abcb7 is essential in mice and participates in cytosolic iron-sulfur cluster biogenesis.</title>
        <authorList>
            <person name="Pondarre C."/>
            <person name="Antiochos B.B."/>
            <person name="Campagna D.R."/>
            <person name="Clarke S.L."/>
            <person name="Greer E.L."/>
            <person name="Deck K.M."/>
            <person name="McDonald A."/>
            <person name="Han A.P."/>
            <person name="Medlock A."/>
            <person name="Kutok J.L."/>
            <person name="Anderson S.A."/>
            <person name="Eisenstein R.S."/>
            <person name="Fleming M.D."/>
        </authorList>
    </citation>
    <scope>DISRUPTION PHENOTYPE</scope>
    <scope>FUNCTION</scope>
</reference>
<reference key="7">
    <citation type="journal article" date="2007" name="Blood">
        <title>Abcb7, the gene responsible for X-linked sideroblastic anemia with ataxia, is essential for hematopoiesis.</title>
        <authorList>
            <person name="Pondarre C."/>
            <person name="Campagna D.R."/>
            <person name="Antiochos B."/>
            <person name="Sikorski L."/>
            <person name="Mulhern H."/>
            <person name="Fleming M.D."/>
        </authorList>
    </citation>
    <scope>MUTAGENESIS OF GLU-433</scope>
    <scope>FUNCTION</scope>
</reference>
<reference key="8">
    <citation type="journal article" date="2010" name="Cell">
        <title>A tissue-specific atlas of mouse protein phosphorylation and expression.</title>
        <authorList>
            <person name="Huttlin E.L."/>
            <person name="Jedrychowski M.P."/>
            <person name="Elias J.E."/>
            <person name="Goswami T."/>
            <person name="Rad R."/>
            <person name="Beausoleil S.A."/>
            <person name="Villen J."/>
            <person name="Haas W."/>
            <person name="Sowa M.E."/>
            <person name="Gygi S.P."/>
        </authorList>
    </citation>
    <scope>IDENTIFICATION BY MASS SPECTROMETRY [LARGE SCALE ANALYSIS]</scope>
    <source>
        <tissue>Brain</tissue>
        <tissue>Brown adipose tissue</tissue>
        <tissue>Heart</tissue>
        <tissue>Kidney</tissue>
        <tissue>Liver</tissue>
        <tissue>Lung</tissue>
        <tissue>Pancreas</tissue>
        <tissue>Spleen</tissue>
        <tissue>Testis</tissue>
    </source>
</reference>
<reference key="9">
    <citation type="journal article" date="2013" name="Proc. Natl. Acad. Sci. U.S.A.">
        <title>Label-free quantitative proteomics of the lysine acetylome in mitochondria identifies substrates of SIRT3 in metabolic pathways.</title>
        <authorList>
            <person name="Rardin M.J."/>
            <person name="Newman J.C."/>
            <person name="Held J.M."/>
            <person name="Cusack M.P."/>
            <person name="Sorensen D.J."/>
            <person name="Li B."/>
            <person name="Schilling B."/>
            <person name="Mooney S.D."/>
            <person name="Kahn C.R."/>
            <person name="Verdin E."/>
            <person name="Gibson B.W."/>
        </authorList>
    </citation>
    <scope>ACETYLATION [LARGE SCALE ANALYSIS] AT LYS-216; LYS-251 AND LYS-350</scope>
    <scope>IDENTIFICATION BY MASS SPECTROMETRY [LARGE SCALE ANALYSIS]</scope>
    <source>
        <tissue>Liver</tissue>
    </source>
</reference>
<reference key="10">
    <citation type="journal article" date="2019" name="Haematologica">
        <title>Dimeric ferrochelatase bridges ABCB7 and ABCB10 homodimers in an architecturally defined molecular complex required for heme biosynthesis.</title>
        <authorList>
            <person name="Maio N."/>
            <person name="Kim K.S."/>
            <person name="Holmes-Hampton G."/>
            <person name="Singh A."/>
            <person name="Rouault T.A."/>
        </authorList>
    </citation>
    <scope>FUNCTION</scope>
    <scope>INTERACTION WITH FECH</scope>
    <scope>SUBUNIT</scope>
</reference>
<sequence length="752" mass="82581">MALLAIHSWRWAAAAVAFEKHKHSAVLTRALVSMCGSGPRWSSSQRGASGSARLSQTTESLRNTTQQRWGKDNSRQLLDATKALQTWPLIEKRTCWHGHAGGGLHTDPKEGLKDVDTRKIIKAMLSYVWPEDRPDLRARVAISLGFLGGAKAMNIVVPFMFKYAVDSLNQMSGNMLNLSDAPNTVATMATAVLIGYGVSRAGAAFFNEVRNAVFGKVAQNSIRRIAKNVFLHLHNLDLGFHLSRQTGALSKAIDRGTRGISFVLSALVFNLLPIVFEMMLVSSVLYYKCGAQFALVTLGTLGAYTAFTVAVTRWRTRFRIEMNKADNDAGNAAIDSLLNYETVKYFNNEKYEAQRYDGFLKTYETASLKSTSTLAMLNFGQNAIFSVGLTAIMVLASQGIVAGALTVGDLVMVNGLLFQLSLPLNFLGTVYRETRQALIDMNTLFTLLKVDTRIKDKVMAPPLQITPQTATVAFDNVHFEYIEGQKVLNGVSFEVPAGKKVAIVGGSGSGKSTIVRLLFRFYEPQKGSIYLAGQNLQDVSLESLRRAVGVVPQDAVLFHNTIYYNLLYGNINASPEEVYAVAKLAGLHDAILRMPHGYDTQVGERGLKLSGGEKQRVAIARAILKNPPVILYDEATSSLDSITEETILGAMRDVVKHRTSIFIAHRLSTVVDADEIIVLSQGKVAERGTHYGLLANSSSIYSEMWHTQSNRVQNQDSLGWDAKKESLSKEEERKKLQEEIVNSVKGCGNCSC</sequence>
<evidence type="ECO:0000250" key="1">
    <source>
        <dbReference type="UniProtKB" id="O75027"/>
    </source>
</evidence>
<evidence type="ECO:0000250" key="2">
    <source>
        <dbReference type="UniProtKB" id="P40416"/>
    </source>
</evidence>
<evidence type="ECO:0000250" key="3">
    <source>
        <dbReference type="UniProtKB" id="Q2G506"/>
    </source>
</evidence>
<evidence type="ECO:0000250" key="4">
    <source>
        <dbReference type="UniProtKB" id="Q704E8"/>
    </source>
</evidence>
<evidence type="ECO:0000250" key="5">
    <source>
        <dbReference type="UniProtKB" id="Q9NP58"/>
    </source>
</evidence>
<evidence type="ECO:0000255" key="6"/>
<evidence type="ECO:0000255" key="7">
    <source>
        <dbReference type="PROSITE-ProRule" id="PRU00434"/>
    </source>
</evidence>
<evidence type="ECO:0000255" key="8">
    <source>
        <dbReference type="PROSITE-ProRule" id="PRU00441"/>
    </source>
</evidence>
<evidence type="ECO:0000256" key="9">
    <source>
        <dbReference type="SAM" id="MobiDB-lite"/>
    </source>
</evidence>
<evidence type="ECO:0000269" key="10">
    <source>
    </source>
</evidence>
<evidence type="ECO:0000269" key="11">
    <source>
    </source>
</evidence>
<evidence type="ECO:0000269" key="12">
    <source>
    </source>
</evidence>
<evidence type="ECO:0000269" key="13">
    <source>
    </source>
</evidence>
<evidence type="ECO:0000305" key="14"/>
<evidence type="ECO:0000312" key="15">
    <source>
        <dbReference type="MGI" id="MGI:109533"/>
    </source>
</evidence>
<evidence type="ECO:0007744" key="16">
    <source>
    </source>
</evidence>
<comment type="function">
    <text evidence="4 10 11 12 13">Exports glutathione-coordinated iron-sulfur clusters such as [2Fe-2S]-(GS)4 cluster from the mitochondria to the cytosol in an ATP-dependent manner allowing the assembly of the cytosolic iron-sulfur (Fe/S) cluster-containing proteins and participates in iron homeostasis (PubMed:16424901, PubMed:16467350). Moreover, through a functional complex formed of ABCB7, FECH and ABCB10, also plays a role in the cellular iron homeostasis, mitochondrial function and heme biosynthesis (PubMed:30765471). In cardiomyocytes, regulates cellular iron homeostasis and cellular reactive oxygen species (ROS) levels through its interaction with COX4I1 (By similarity). May also play a role in hematopoiesis (PubMed:17192398).</text>
</comment>
<comment type="catalytic activity">
    <reaction evidence="1">
        <text>(glutathione)4[2Fe(III)-2S] cluster(in) + ATP + H2O = (glutathione)4[2Fe(III)-2S] cluster(out) + ADP + phosphate + H(+)</text>
        <dbReference type="Rhea" id="RHEA:67028"/>
        <dbReference type="ChEBI" id="CHEBI:15377"/>
        <dbReference type="ChEBI" id="CHEBI:15378"/>
        <dbReference type="ChEBI" id="CHEBI:30616"/>
        <dbReference type="ChEBI" id="CHEBI:43474"/>
        <dbReference type="ChEBI" id="CHEBI:167627"/>
        <dbReference type="ChEBI" id="CHEBI:456216"/>
    </reaction>
    <physiologicalReaction direction="left-to-right" evidence="1">
        <dbReference type="Rhea" id="RHEA:67029"/>
    </physiologicalReaction>
</comment>
<comment type="subunit">
    <text evidence="1 4 13">Homodimer or heterodimer. Interacts with C10orf88/PAAT (By similarity). Forms a complex with ABCB10 and FECH, where a dimeric FECH bridges ABCB7 and ABCB10 homodimers; this complex may be required for cellular iron homeostasis, mitochondrial function and heme biosynthesis (PubMed:30765471). Interacts with FECH (PubMed:30765471). Interacts with ATP5F1A. Interacts with COX4I1; this interaction allows the regulation of cellular iron homeostasis and cellular reactive oxygen species (ROS) levels in cardiomyocytes (By similarity).</text>
</comment>
<comment type="subcellular location">
    <subcellularLocation>
        <location evidence="2">Mitochondrion inner membrane</location>
        <topology evidence="2">Multi-pass membrane protein</topology>
    </subcellularLocation>
</comment>
<comment type="disruption phenotype">
    <text evidence="10 11">Heterozygous females for Abcb7 with a maternally inherited mutant allele die embryonically, due to a defect in the extra-embryonic visceral endoderm, while heterozygous females with a paternally inherited mutant allele are viable (PubMed:16467350). The systemic and tissue-specific deletion of ABCB7 in most organs, including CNS and bone marrow, is lethal (PubMed:16467350). Conditional knockout in hepatocyte causes periportal hepatocellular iron deposition with characteristic round structures and leads to iron-dependent regulation of IRP1 protein (PubMed:16424901, PubMed:16467350).</text>
</comment>
<comment type="similarity">
    <text evidence="14">Belongs to the ABC transporter superfamily. ABCB family. Heavy Metal importer (TC 3.A.1.210) subfamily.</text>
</comment>
<protein>
    <recommendedName>
        <fullName evidence="14">Iron-sulfur clusters transporter ABCB7, mitochondrial</fullName>
    </recommendedName>
    <alternativeName>
        <fullName>ATP-binding cassette sub-family B member 7, mitochondrial</fullName>
    </alternativeName>
    <alternativeName>
        <fullName>ATP-binding cassette transporter 7</fullName>
        <shortName>ABC transporter 7 protein</shortName>
    </alternativeName>
</protein>
<dbReference type="EMBL" id="AK151967">
    <property type="protein sequence ID" value="BAE30838.1"/>
    <property type="molecule type" value="mRNA"/>
</dbReference>
<dbReference type="EMBL" id="AK152535">
    <property type="protein sequence ID" value="BAE31291.1"/>
    <property type="molecule type" value="mRNA"/>
</dbReference>
<dbReference type="EMBL" id="AK152816">
    <property type="protein sequence ID" value="BAE31519.1"/>
    <property type="molecule type" value="mRNA"/>
</dbReference>
<dbReference type="EMBL" id="AL663052">
    <property type="status" value="NOT_ANNOTATED_CDS"/>
    <property type="molecule type" value="Genomic_DNA"/>
</dbReference>
<dbReference type="EMBL" id="BC151037">
    <property type="protein sequence ID" value="AAI51038.1"/>
    <property type="molecule type" value="mRNA"/>
</dbReference>
<dbReference type="EMBL" id="U43892">
    <property type="protein sequence ID" value="AAC53152.1"/>
    <property type="molecule type" value="mRNA"/>
</dbReference>
<dbReference type="CCDS" id="CCDS53167.1"/>
<dbReference type="RefSeq" id="NP_033722.1">
    <property type="nucleotide sequence ID" value="NM_009592.1"/>
</dbReference>
<dbReference type="SMR" id="Q61102"/>
<dbReference type="BioGRID" id="197903">
    <property type="interactions" value="10"/>
</dbReference>
<dbReference type="FunCoup" id="Q61102">
    <property type="interactions" value="2404"/>
</dbReference>
<dbReference type="IntAct" id="Q61102">
    <property type="interactions" value="10"/>
</dbReference>
<dbReference type="MINT" id="Q61102"/>
<dbReference type="STRING" id="10090.ENSMUSP00000033695"/>
<dbReference type="GlyGen" id="Q61102">
    <property type="glycosylation" value="1 site, 1 O-linked glycan (1 site)"/>
</dbReference>
<dbReference type="iPTMnet" id="Q61102"/>
<dbReference type="PhosphoSitePlus" id="Q61102"/>
<dbReference type="SwissPalm" id="Q61102"/>
<dbReference type="jPOST" id="Q61102"/>
<dbReference type="PaxDb" id="10090-ENSMUSP00000033695"/>
<dbReference type="PeptideAtlas" id="Q61102"/>
<dbReference type="ProteomicsDB" id="296469"/>
<dbReference type="Pumba" id="Q61102"/>
<dbReference type="Antibodypedia" id="28030">
    <property type="antibodies" value="288 antibodies from 33 providers"/>
</dbReference>
<dbReference type="Ensembl" id="ENSMUST00000033695.6">
    <property type="protein sequence ID" value="ENSMUSP00000033695.6"/>
    <property type="gene ID" value="ENSMUSG00000031333.8"/>
</dbReference>
<dbReference type="GeneID" id="11306"/>
<dbReference type="KEGG" id="mmu:11306"/>
<dbReference type="UCSC" id="uc009uaf.2">
    <property type="organism name" value="mouse"/>
</dbReference>
<dbReference type="AGR" id="MGI:109533"/>
<dbReference type="CTD" id="22"/>
<dbReference type="MGI" id="MGI:109533">
    <property type="gene designation" value="Abcb7"/>
</dbReference>
<dbReference type="VEuPathDB" id="HostDB:ENSMUSG00000031333"/>
<dbReference type="eggNOG" id="KOG0057">
    <property type="taxonomic scope" value="Eukaryota"/>
</dbReference>
<dbReference type="GeneTree" id="ENSGT00940000156281"/>
<dbReference type="HOGENOM" id="CLU_000604_84_1_1"/>
<dbReference type="InParanoid" id="Q61102"/>
<dbReference type="OMA" id="VFHIIPI"/>
<dbReference type="OrthoDB" id="6500128at2759"/>
<dbReference type="PhylomeDB" id="Q61102"/>
<dbReference type="TreeFam" id="TF105195"/>
<dbReference type="Reactome" id="R-MMU-1369007">
    <property type="pathway name" value="Mitochondrial ABC transporters"/>
</dbReference>
<dbReference type="BioGRID-ORCS" id="11306">
    <property type="hits" value="26 hits in 78 CRISPR screens"/>
</dbReference>
<dbReference type="ChiTaRS" id="Abcb7">
    <property type="organism name" value="mouse"/>
</dbReference>
<dbReference type="PRO" id="PR:Q61102"/>
<dbReference type="Proteomes" id="UP000000589">
    <property type="component" value="Chromosome X"/>
</dbReference>
<dbReference type="RNAct" id="Q61102">
    <property type="molecule type" value="protein"/>
</dbReference>
<dbReference type="Bgee" id="ENSMUSG00000031333">
    <property type="expression patterns" value="Expressed in digastric muscle group and 252 other cell types or tissues"/>
</dbReference>
<dbReference type="GO" id="GO:0005743">
    <property type="term" value="C:mitochondrial inner membrane"/>
    <property type="evidence" value="ECO:0007005"/>
    <property type="project" value="MGI"/>
</dbReference>
<dbReference type="GO" id="GO:0005739">
    <property type="term" value="C:mitochondrion"/>
    <property type="evidence" value="ECO:0007005"/>
    <property type="project" value="MGI"/>
</dbReference>
<dbReference type="GO" id="GO:0140481">
    <property type="term" value="F:ABC-type iron-sulfur cluster transporter activity"/>
    <property type="evidence" value="ECO:0000250"/>
    <property type="project" value="UniProtKB"/>
</dbReference>
<dbReference type="GO" id="GO:0005524">
    <property type="term" value="F:ATP binding"/>
    <property type="evidence" value="ECO:0007669"/>
    <property type="project" value="UniProtKB-KW"/>
</dbReference>
<dbReference type="GO" id="GO:0016887">
    <property type="term" value="F:ATP hydrolysis activity"/>
    <property type="evidence" value="ECO:0007669"/>
    <property type="project" value="InterPro"/>
</dbReference>
<dbReference type="GO" id="GO:0042803">
    <property type="term" value="F:protein homodimerization activity"/>
    <property type="evidence" value="ECO:0007669"/>
    <property type="project" value="Ensembl"/>
</dbReference>
<dbReference type="GO" id="GO:0006879">
    <property type="term" value="P:intracellular iron ion homeostasis"/>
    <property type="evidence" value="ECO:0000315"/>
    <property type="project" value="UniProtKB"/>
</dbReference>
<dbReference type="GO" id="GO:0034755">
    <property type="term" value="P:iron ion transmembrane transport"/>
    <property type="evidence" value="ECO:0000250"/>
    <property type="project" value="UniProtKB"/>
</dbReference>
<dbReference type="GO" id="GO:0016226">
    <property type="term" value="P:iron-sulfur cluster assembly"/>
    <property type="evidence" value="ECO:0000315"/>
    <property type="project" value="UniProtKB"/>
</dbReference>
<dbReference type="GO" id="GO:0140466">
    <property type="term" value="P:iron-sulfur cluster export from the mitochondrion"/>
    <property type="evidence" value="ECO:0000250"/>
    <property type="project" value="UniProtKB"/>
</dbReference>
<dbReference type="GO" id="GO:1903427">
    <property type="term" value="P:negative regulation of reactive oxygen species biosynthetic process"/>
    <property type="evidence" value="ECO:0000250"/>
    <property type="project" value="UniProtKB"/>
</dbReference>
<dbReference type="GO" id="GO:0070455">
    <property type="term" value="P:positive regulation of heme biosynthetic process"/>
    <property type="evidence" value="ECO:0000315"/>
    <property type="project" value="UniProtKB"/>
</dbReference>
<dbReference type="GO" id="GO:1903331">
    <property type="term" value="P:positive regulation of iron-sulfur cluster assembly"/>
    <property type="evidence" value="ECO:0000315"/>
    <property type="project" value="UniProtKB"/>
</dbReference>
<dbReference type="CDD" id="cd18582">
    <property type="entry name" value="ABC_6TM_ATM1_ABCB7"/>
    <property type="match status" value="1"/>
</dbReference>
<dbReference type="CDD" id="cd03253">
    <property type="entry name" value="ABCC_ATM1_transporter"/>
    <property type="match status" value="1"/>
</dbReference>
<dbReference type="FunFam" id="1.20.1560.10:FF:000004">
    <property type="entry name" value="ATP-binding cassette sub-family B member 7"/>
    <property type="match status" value="1"/>
</dbReference>
<dbReference type="FunFam" id="3.40.50.300:FF:000186">
    <property type="entry name" value="ATP-binding cassette sub-family B member 7, mitochondrial"/>
    <property type="match status" value="1"/>
</dbReference>
<dbReference type="Gene3D" id="1.20.1560.10">
    <property type="entry name" value="ABC transporter type 1, transmembrane domain"/>
    <property type="match status" value="1"/>
</dbReference>
<dbReference type="Gene3D" id="3.40.50.300">
    <property type="entry name" value="P-loop containing nucleotide triphosphate hydrolases"/>
    <property type="match status" value="1"/>
</dbReference>
<dbReference type="InterPro" id="IPR003593">
    <property type="entry name" value="AAA+_ATPase"/>
</dbReference>
<dbReference type="InterPro" id="IPR011527">
    <property type="entry name" value="ABC1_TM_dom"/>
</dbReference>
<dbReference type="InterPro" id="IPR036640">
    <property type="entry name" value="ABC1_TM_sf"/>
</dbReference>
<dbReference type="InterPro" id="IPR003439">
    <property type="entry name" value="ABC_transporter-like_ATP-bd"/>
</dbReference>
<dbReference type="InterPro" id="IPR017871">
    <property type="entry name" value="ABC_transporter-like_CS"/>
</dbReference>
<dbReference type="InterPro" id="IPR027417">
    <property type="entry name" value="P-loop_NTPase"/>
</dbReference>
<dbReference type="InterPro" id="IPR039421">
    <property type="entry name" value="Type_1_exporter"/>
</dbReference>
<dbReference type="PANTHER" id="PTHR24221">
    <property type="entry name" value="ATP-BINDING CASSETTE SUB-FAMILY B"/>
    <property type="match status" value="1"/>
</dbReference>
<dbReference type="PANTHER" id="PTHR24221:SF402">
    <property type="entry name" value="IRON-SULFUR CLUSTERS TRANSPORTER ABCB7, MITOCHONDRIAL"/>
    <property type="match status" value="1"/>
</dbReference>
<dbReference type="Pfam" id="PF00664">
    <property type="entry name" value="ABC_membrane"/>
    <property type="match status" value="1"/>
</dbReference>
<dbReference type="Pfam" id="PF00005">
    <property type="entry name" value="ABC_tran"/>
    <property type="match status" value="1"/>
</dbReference>
<dbReference type="SMART" id="SM00382">
    <property type="entry name" value="AAA"/>
    <property type="match status" value="1"/>
</dbReference>
<dbReference type="SUPFAM" id="SSF90123">
    <property type="entry name" value="ABC transporter transmembrane region"/>
    <property type="match status" value="1"/>
</dbReference>
<dbReference type="SUPFAM" id="SSF52540">
    <property type="entry name" value="P-loop containing nucleoside triphosphate hydrolases"/>
    <property type="match status" value="1"/>
</dbReference>
<dbReference type="PROSITE" id="PS50929">
    <property type="entry name" value="ABC_TM1F"/>
    <property type="match status" value="1"/>
</dbReference>
<dbReference type="PROSITE" id="PS00211">
    <property type="entry name" value="ABC_TRANSPORTER_1"/>
    <property type="match status" value="1"/>
</dbReference>
<dbReference type="PROSITE" id="PS50893">
    <property type="entry name" value="ABC_TRANSPORTER_2"/>
    <property type="match status" value="1"/>
</dbReference>
<organism>
    <name type="scientific">Mus musculus</name>
    <name type="common">Mouse</name>
    <dbReference type="NCBI Taxonomy" id="10090"/>
    <lineage>
        <taxon>Eukaryota</taxon>
        <taxon>Metazoa</taxon>
        <taxon>Chordata</taxon>
        <taxon>Craniata</taxon>
        <taxon>Vertebrata</taxon>
        <taxon>Euteleostomi</taxon>
        <taxon>Mammalia</taxon>
        <taxon>Eutheria</taxon>
        <taxon>Euarchontoglires</taxon>
        <taxon>Glires</taxon>
        <taxon>Rodentia</taxon>
        <taxon>Myomorpha</taxon>
        <taxon>Muroidea</taxon>
        <taxon>Muridae</taxon>
        <taxon>Murinae</taxon>
        <taxon>Mus</taxon>
        <taxon>Mus</taxon>
    </lineage>
</organism>
<accession>Q61102</accession>
<accession>A2AC46</accession>
<accession>Q3U7S8</accession>
<keyword id="KW-0007">Acetylation</keyword>
<keyword id="KW-0067">ATP-binding</keyword>
<keyword id="KW-0472">Membrane</keyword>
<keyword id="KW-0496">Mitochondrion</keyword>
<keyword id="KW-0999">Mitochondrion inner membrane</keyword>
<keyword id="KW-0547">Nucleotide-binding</keyword>
<keyword id="KW-0597">Phosphoprotein</keyword>
<keyword id="KW-1185">Reference proteome</keyword>
<keyword id="KW-0809">Transit peptide</keyword>
<keyword id="KW-0812">Transmembrane</keyword>
<keyword id="KW-1133">Transmembrane helix</keyword>
<keyword id="KW-0813">Transport</keyword>
<name>ABCB7_MOUSE</name>
<proteinExistence type="evidence at protein level"/>
<feature type="transit peptide" description="Mitochondrion" evidence="6">
    <location>
        <begin position="1"/>
        <end position="22"/>
    </location>
</feature>
<feature type="chain" id="PRO_0000093295" description="Iron-sulfur clusters transporter ABCB7, mitochondrial">
    <location>
        <begin position="23"/>
        <end position="752"/>
    </location>
</feature>
<feature type="topological domain" description="Mitochondrial matrix" evidence="2">
    <location>
        <begin position="23"/>
        <end position="140"/>
    </location>
</feature>
<feature type="transmembrane region" description="Helical" evidence="8">
    <location>
        <begin position="141"/>
        <end position="161"/>
    </location>
</feature>
<feature type="topological domain" description="Mitochondrial intermembrane" evidence="2">
    <location>
        <begin position="162"/>
        <end position="185"/>
    </location>
</feature>
<feature type="transmembrane region" description="Helical" evidence="8">
    <location>
        <begin position="186"/>
        <end position="206"/>
    </location>
</feature>
<feature type="topological domain" description="Mitochondrial matrix" evidence="2">
    <location>
        <begin position="207"/>
        <end position="259"/>
    </location>
</feature>
<feature type="transmembrane region" description="Helical" evidence="8">
    <location>
        <begin position="260"/>
        <end position="280"/>
    </location>
</feature>
<feature type="topological domain" description="Mitochondrial intermembrane" evidence="2">
    <location>
        <begin position="281"/>
        <end position="290"/>
    </location>
</feature>
<feature type="transmembrane region" description="Helical" evidence="8">
    <location>
        <begin position="291"/>
        <end position="311"/>
    </location>
</feature>
<feature type="topological domain" description="Mitochondrial matrix" evidence="2">
    <location>
        <begin position="312"/>
        <end position="382"/>
    </location>
</feature>
<feature type="transmembrane region" description="Helical" evidence="8">
    <location>
        <begin position="383"/>
        <end position="403"/>
    </location>
</feature>
<feature type="topological domain" description="Mitochondrial intermembrane" evidence="2">
    <location>
        <begin position="404"/>
        <end position="409"/>
    </location>
</feature>
<feature type="transmembrane region" description="Helical" evidence="8">
    <location>
        <begin position="410"/>
        <end position="430"/>
    </location>
</feature>
<feature type="topological domain" description="Mitochondrial matrix" evidence="2">
    <location>
        <begin position="431"/>
        <end position="752"/>
    </location>
</feature>
<feature type="domain" description="ABC transmembrane type-1" evidence="8">
    <location>
        <begin position="140"/>
        <end position="436"/>
    </location>
</feature>
<feature type="domain" description="ABC transporter" evidence="7">
    <location>
        <begin position="472"/>
        <end position="706"/>
    </location>
</feature>
<feature type="region of interest" description="Disordered" evidence="9">
    <location>
        <begin position="38"/>
        <end position="72"/>
    </location>
</feature>
<feature type="compositionally biased region" description="Low complexity" evidence="9">
    <location>
        <begin position="42"/>
        <end position="55"/>
    </location>
</feature>
<feature type="compositionally biased region" description="Polar residues" evidence="9">
    <location>
        <begin position="56"/>
        <end position="68"/>
    </location>
</feature>
<feature type="binding site" evidence="2">
    <location>
        <begin position="315"/>
        <end position="319"/>
    </location>
    <ligand>
        <name>glutathione</name>
        <dbReference type="ChEBI" id="CHEBI:57925"/>
    </ligand>
</feature>
<feature type="binding site" evidence="2">
    <location>
        <begin position="378"/>
        <end position="381"/>
    </location>
    <ligand>
        <name>glutathione</name>
        <dbReference type="ChEBI" id="CHEBI:57925"/>
    </ligand>
</feature>
<feature type="binding site" evidence="3">
    <location>
        <position position="428"/>
    </location>
    <ligand>
        <name>glutathione</name>
        <dbReference type="ChEBI" id="CHEBI:57925"/>
    </ligand>
</feature>
<feature type="binding site" evidence="5">
    <location>
        <position position="481"/>
    </location>
    <ligand>
        <name>ATP</name>
        <dbReference type="ChEBI" id="CHEBI:30616"/>
    </ligand>
</feature>
<feature type="binding site" evidence="7">
    <location>
        <begin position="505"/>
        <end position="516"/>
    </location>
    <ligand>
        <name>ATP</name>
        <dbReference type="ChEBI" id="CHEBI:30616"/>
    </ligand>
</feature>
<feature type="modified residue" description="N6-acetyllysine" evidence="16">
    <location>
        <position position="216"/>
    </location>
</feature>
<feature type="modified residue" description="N6-acetyllysine" evidence="16">
    <location>
        <position position="251"/>
    </location>
</feature>
<feature type="modified residue" description="Phosphoserine" evidence="4">
    <location>
        <position position="336"/>
    </location>
</feature>
<feature type="modified residue" description="Phosphotyrosine" evidence="4">
    <location>
        <position position="340"/>
    </location>
</feature>
<feature type="modified residue" description="Phosphothreonine" evidence="4">
    <location>
        <position position="342"/>
    </location>
</feature>
<feature type="modified residue" description="N6-acetyllysine" evidence="16">
    <location>
        <position position="350"/>
    </location>
</feature>
<feature type="mutagenesis site" description="Exhibits siderocytosis with increased zinc protoporphyrin." evidence="12">
    <original>E</original>
    <variation>K</variation>
    <location>
        <position position="433"/>
    </location>
</feature>
<feature type="sequence conflict" description="In Ref. 1; BAE30838/BAE31291/BAE31519." evidence="14" ref="1">
    <original>S</original>
    <variation>T</variation>
    <location>
        <position position="702"/>
    </location>
</feature>
<gene>
    <name evidence="15" type="primary">Abcb7</name>
    <name type="synonym">Abc7</name>
</gene>